<name>Y2214_CLONN</name>
<reference key="1">
    <citation type="journal article" date="2006" name="Nat. Biotechnol.">
        <title>The genome and transcriptomes of the anti-tumor agent Clostridium novyi-NT.</title>
        <authorList>
            <person name="Bettegowda C."/>
            <person name="Huang X."/>
            <person name="Lin J."/>
            <person name="Cheong I."/>
            <person name="Kohli M."/>
            <person name="Szabo S.A."/>
            <person name="Zhang X."/>
            <person name="Diaz L.A. Jr."/>
            <person name="Velculescu V.E."/>
            <person name="Parmigiani G."/>
            <person name="Kinzler K.W."/>
            <person name="Vogelstein B."/>
            <person name="Zhou S."/>
        </authorList>
    </citation>
    <scope>NUCLEOTIDE SEQUENCE [LARGE SCALE GENOMIC DNA]</scope>
    <source>
        <strain>NT</strain>
    </source>
</reference>
<keyword id="KW-1185">Reference proteome</keyword>
<dbReference type="EMBL" id="CP000382">
    <property type="protein sequence ID" value="ABK60960.1"/>
    <property type="molecule type" value="Genomic_DNA"/>
</dbReference>
<dbReference type="RefSeq" id="WP_011722286.1">
    <property type="nucleotide sequence ID" value="NC_008593.1"/>
</dbReference>
<dbReference type="SMR" id="A0Q0Y5"/>
<dbReference type="STRING" id="386415.NT01CX_2214"/>
<dbReference type="KEGG" id="cno:NT01CX_2214"/>
<dbReference type="eggNOG" id="COG2739">
    <property type="taxonomic scope" value="Bacteria"/>
</dbReference>
<dbReference type="HOGENOM" id="CLU_129218_0_1_9"/>
<dbReference type="Proteomes" id="UP000008220">
    <property type="component" value="Chromosome"/>
</dbReference>
<dbReference type="Gene3D" id="1.10.10.10">
    <property type="entry name" value="Winged helix-like DNA-binding domain superfamily/Winged helix DNA-binding domain"/>
    <property type="match status" value="1"/>
</dbReference>
<dbReference type="HAMAP" id="MF_00245">
    <property type="entry name" value="UPF0122"/>
    <property type="match status" value="1"/>
</dbReference>
<dbReference type="InterPro" id="IPR013324">
    <property type="entry name" value="RNA_pol_sigma_r3/r4-like"/>
</dbReference>
<dbReference type="InterPro" id="IPR007394">
    <property type="entry name" value="UPF0122"/>
</dbReference>
<dbReference type="InterPro" id="IPR054831">
    <property type="entry name" value="UPF0122_fam_protein"/>
</dbReference>
<dbReference type="InterPro" id="IPR036388">
    <property type="entry name" value="WH-like_DNA-bd_sf"/>
</dbReference>
<dbReference type="NCBIfam" id="NF001072">
    <property type="entry name" value="PRK00118.2-2"/>
    <property type="match status" value="1"/>
</dbReference>
<dbReference type="NCBIfam" id="NF045758">
    <property type="entry name" value="YlxM"/>
    <property type="match status" value="1"/>
</dbReference>
<dbReference type="PANTHER" id="PTHR40083">
    <property type="entry name" value="UPF0122 PROTEIN CBO2450/CLC_2298"/>
    <property type="match status" value="1"/>
</dbReference>
<dbReference type="PANTHER" id="PTHR40083:SF1">
    <property type="entry name" value="UPF0122 PROTEIN YLXM"/>
    <property type="match status" value="1"/>
</dbReference>
<dbReference type="Pfam" id="PF04297">
    <property type="entry name" value="UPF0122"/>
    <property type="match status" value="1"/>
</dbReference>
<dbReference type="SUPFAM" id="SSF88659">
    <property type="entry name" value="Sigma3 and sigma4 domains of RNA polymerase sigma factors"/>
    <property type="match status" value="1"/>
</dbReference>
<accession>A0Q0Y5</accession>
<organism>
    <name type="scientific">Clostridium novyi (strain NT)</name>
    <dbReference type="NCBI Taxonomy" id="386415"/>
    <lineage>
        <taxon>Bacteria</taxon>
        <taxon>Bacillati</taxon>
        <taxon>Bacillota</taxon>
        <taxon>Clostridia</taxon>
        <taxon>Eubacteriales</taxon>
        <taxon>Clostridiaceae</taxon>
        <taxon>Clostridium</taxon>
    </lineage>
</organism>
<proteinExistence type="inferred from homology"/>
<protein>
    <recommendedName>
        <fullName evidence="1">UPF0122 protein NT01CX_2214</fullName>
    </recommendedName>
</protein>
<feature type="chain" id="PRO_1000012524" description="UPF0122 protein NT01CX_2214">
    <location>
        <begin position="1"/>
        <end position="115"/>
    </location>
</feature>
<gene>
    <name type="ordered locus">NT01CX_2214</name>
</gene>
<sequence length="115" mass="13845">MEDRIKISILMDYYRELLTEKQKYVMELYFNQDLSLAEISELTNTSRQAIYDIIKRCNKLLVDYEKKLNLARKNKELIKAKQIIIEKINDLEYSNNKNDFKNSLEDIKNTIVQYI</sequence>
<comment type="function">
    <text evidence="1">Might take part in the signal recognition particle (SRP) pathway. This is inferred from the conservation of its genetic proximity to ftsY/ffh. May be a regulatory protein.</text>
</comment>
<comment type="similarity">
    <text evidence="1">Belongs to the UPF0122 family.</text>
</comment>
<evidence type="ECO:0000255" key="1">
    <source>
        <dbReference type="HAMAP-Rule" id="MF_00245"/>
    </source>
</evidence>